<gene>
    <name evidence="1" type="primary">argS</name>
    <name type="ordered locus">Cbei_1019</name>
</gene>
<evidence type="ECO:0000255" key="1">
    <source>
        <dbReference type="HAMAP-Rule" id="MF_00123"/>
    </source>
</evidence>
<proteinExistence type="inferred from homology"/>
<keyword id="KW-0030">Aminoacyl-tRNA synthetase</keyword>
<keyword id="KW-0067">ATP-binding</keyword>
<keyword id="KW-0963">Cytoplasm</keyword>
<keyword id="KW-0436">Ligase</keyword>
<keyword id="KW-0547">Nucleotide-binding</keyword>
<keyword id="KW-0648">Protein biosynthesis</keyword>
<comment type="catalytic activity">
    <reaction evidence="1">
        <text>tRNA(Arg) + L-arginine + ATP = L-arginyl-tRNA(Arg) + AMP + diphosphate</text>
        <dbReference type="Rhea" id="RHEA:20301"/>
        <dbReference type="Rhea" id="RHEA-COMP:9658"/>
        <dbReference type="Rhea" id="RHEA-COMP:9673"/>
        <dbReference type="ChEBI" id="CHEBI:30616"/>
        <dbReference type="ChEBI" id="CHEBI:32682"/>
        <dbReference type="ChEBI" id="CHEBI:33019"/>
        <dbReference type="ChEBI" id="CHEBI:78442"/>
        <dbReference type="ChEBI" id="CHEBI:78513"/>
        <dbReference type="ChEBI" id="CHEBI:456215"/>
        <dbReference type="EC" id="6.1.1.19"/>
    </reaction>
</comment>
<comment type="subunit">
    <text evidence="1">Monomer.</text>
</comment>
<comment type="subcellular location">
    <subcellularLocation>
        <location evidence="1">Cytoplasm</location>
    </subcellularLocation>
</comment>
<comment type="similarity">
    <text evidence="1">Belongs to the class-I aminoacyl-tRNA synthetase family.</text>
</comment>
<protein>
    <recommendedName>
        <fullName evidence="1">Arginine--tRNA ligase</fullName>
        <ecNumber evidence="1">6.1.1.19</ecNumber>
    </recommendedName>
    <alternativeName>
        <fullName evidence="1">Arginyl-tRNA synthetase</fullName>
        <shortName evidence="1">ArgRS</shortName>
    </alternativeName>
</protein>
<sequence>MDYKSKVAELIKKHVELEIEAIEKLIEIPPKPEMGDYAFPCFQLSKVMRKAPNMIAEELKNSMSTDGFERIENLGPYVNFFVDKGVFAENTIKKALEDGENYGASNIGEGKTVCVEYSSPNIAKPFHVGHLFTTAIGNSLYKMFKKEGYNTVGLNHLGDWGTQFGKLISAYDRWVDEEALEKAPIDELLRIYVKFHEEAEKDPSLEDEARANFKALETGDEKATALWTRFRDLSLKEFERVYNILGVKFDSLAGEAFYNDKMDVVVNELKEKGLLVESNGAQVVMLEEYNMPPCIVLKGDGASIYATRDLAAAMYRKKTYDFHKCVYVVGTPQALHFKQVFKVLELAGHEWAKDCVHVGFGLVKFADRKLSTRNGSIVLLDDLLREAVEKTMEVINEKNPELENKEEVAKKIGVGAVIFTYLKNSREKDIVFDWKEILSFDGETGPYVQYSYARGNSILNRGKECTGTVDYSKLSSKEEFELVKSIANFNSVITLALDKLEPSILTRYVIEVAKGFNKFYNAHSVLNLEDEDLKATRLNLVKASLQVIKNGLELLGIDVVEKM</sequence>
<organism>
    <name type="scientific">Clostridium beijerinckii (strain ATCC 51743 / NCIMB 8052)</name>
    <name type="common">Clostridium acetobutylicum</name>
    <dbReference type="NCBI Taxonomy" id="290402"/>
    <lineage>
        <taxon>Bacteria</taxon>
        <taxon>Bacillati</taxon>
        <taxon>Bacillota</taxon>
        <taxon>Clostridia</taxon>
        <taxon>Eubacteriales</taxon>
        <taxon>Clostridiaceae</taxon>
        <taxon>Clostridium</taxon>
    </lineage>
</organism>
<accession>A6LS73</accession>
<feature type="chain" id="PRO_1000076209" description="Arginine--tRNA ligase">
    <location>
        <begin position="1"/>
        <end position="563"/>
    </location>
</feature>
<feature type="short sequence motif" description="'HIGH' region">
    <location>
        <begin position="120"/>
        <end position="130"/>
    </location>
</feature>
<name>SYR_CLOB8</name>
<dbReference type="EC" id="6.1.1.19" evidence="1"/>
<dbReference type="EMBL" id="CP000721">
    <property type="protein sequence ID" value="ABR33203.1"/>
    <property type="molecule type" value="Genomic_DNA"/>
</dbReference>
<dbReference type="RefSeq" id="WP_011968362.1">
    <property type="nucleotide sequence ID" value="NC_009617.1"/>
</dbReference>
<dbReference type="SMR" id="A6LS73"/>
<dbReference type="KEGG" id="cbe:Cbei_1019"/>
<dbReference type="eggNOG" id="COG0018">
    <property type="taxonomic scope" value="Bacteria"/>
</dbReference>
<dbReference type="HOGENOM" id="CLU_006406_6_1_9"/>
<dbReference type="Proteomes" id="UP000000565">
    <property type="component" value="Chromosome"/>
</dbReference>
<dbReference type="GO" id="GO:0005737">
    <property type="term" value="C:cytoplasm"/>
    <property type="evidence" value="ECO:0007669"/>
    <property type="project" value="UniProtKB-SubCell"/>
</dbReference>
<dbReference type="GO" id="GO:0004814">
    <property type="term" value="F:arginine-tRNA ligase activity"/>
    <property type="evidence" value="ECO:0007669"/>
    <property type="project" value="UniProtKB-UniRule"/>
</dbReference>
<dbReference type="GO" id="GO:0005524">
    <property type="term" value="F:ATP binding"/>
    <property type="evidence" value="ECO:0007669"/>
    <property type="project" value="UniProtKB-UniRule"/>
</dbReference>
<dbReference type="GO" id="GO:0006420">
    <property type="term" value="P:arginyl-tRNA aminoacylation"/>
    <property type="evidence" value="ECO:0007669"/>
    <property type="project" value="UniProtKB-UniRule"/>
</dbReference>
<dbReference type="CDD" id="cd07956">
    <property type="entry name" value="Anticodon_Ia_Arg"/>
    <property type="match status" value="1"/>
</dbReference>
<dbReference type="CDD" id="cd00671">
    <property type="entry name" value="ArgRS_core"/>
    <property type="match status" value="1"/>
</dbReference>
<dbReference type="FunFam" id="1.10.730.10:FF:000008">
    <property type="entry name" value="Arginine--tRNA ligase"/>
    <property type="match status" value="1"/>
</dbReference>
<dbReference type="FunFam" id="3.40.50.620:FF:000116">
    <property type="entry name" value="Arginine--tRNA ligase"/>
    <property type="match status" value="1"/>
</dbReference>
<dbReference type="Gene3D" id="3.30.1360.70">
    <property type="entry name" value="Arginyl tRNA synthetase N-terminal domain"/>
    <property type="match status" value="1"/>
</dbReference>
<dbReference type="Gene3D" id="3.40.50.620">
    <property type="entry name" value="HUPs"/>
    <property type="match status" value="1"/>
</dbReference>
<dbReference type="Gene3D" id="1.10.730.10">
    <property type="entry name" value="Isoleucyl-tRNA Synthetase, Domain 1"/>
    <property type="match status" value="1"/>
</dbReference>
<dbReference type="HAMAP" id="MF_00123">
    <property type="entry name" value="Arg_tRNA_synth"/>
    <property type="match status" value="1"/>
</dbReference>
<dbReference type="InterPro" id="IPR001412">
    <property type="entry name" value="aa-tRNA-synth_I_CS"/>
</dbReference>
<dbReference type="InterPro" id="IPR001278">
    <property type="entry name" value="Arg-tRNA-ligase"/>
</dbReference>
<dbReference type="InterPro" id="IPR005148">
    <property type="entry name" value="Arg-tRNA-synth_N"/>
</dbReference>
<dbReference type="InterPro" id="IPR036695">
    <property type="entry name" value="Arg-tRNA-synth_N_sf"/>
</dbReference>
<dbReference type="InterPro" id="IPR035684">
    <property type="entry name" value="ArgRS_core"/>
</dbReference>
<dbReference type="InterPro" id="IPR008909">
    <property type="entry name" value="DALR_anticod-bd"/>
</dbReference>
<dbReference type="InterPro" id="IPR014729">
    <property type="entry name" value="Rossmann-like_a/b/a_fold"/>
</dbReference>
<dbReference type="InterPro" id="IPR009080">
    <property type="entry name" value="tRNAsynth_Ia_anticodon-bd"/>
</dbReference>
<dbReference type="NCBIfam" id="TIGR00456">
    <property type="entry name" value="argS"/>
    <property type="match status" value="1"/>
</dbReference>
<dbReference type="PANTHER" id="PTHR11956:SF5">
    <property type="entry name" value="ARGININE--TRNA LIGASE, CYTOPLASMIC"/>
    <property type="match status" value="1"/>
</dbReference>
<dbReference type="PANTHER" id="PTHR11956">
    <property type="entry name" value="ARGINYL-TRNA SYNTHETASE"/>
    <property type="match status" value="1"/>
</dbReference>
<dbReference type="Pfam" id="PF03485">
    <property type="entry name" value="Arg_tRNA_synt_N"/>
    <property type="match status" value="1"/>
</dbReference>
<dbReference type="Pfam" id="PF05746">
    <property type="entry name" value="DALR_1"/>
    <property type="match status" value="1"/>
</dbReference>
<dbReference type="Pfam" id="PF00750">
    <property type="entry name" value="tRNA-synt_1d"/>
    <property type="match status" value="1"/>
</dbReference>
<dbReference type="PRINTS" id="PR01038">
    <property type="entry name" value="TRNASYNTHARG"/>
</dbReference>
<dbReference type="SMART" id="SM01016">
    <property type="entry name" value="Arg_tRNA_synt_N"/>
    <property type="match status" value="1"/>
</dbReference>
<dbReference type="SMART" id="SM00836">
    <property type="entry name" value="DALR_1"/>
    <property type="match status" value="1"/>
</dbReference>
<dbReference type="SUPFAM" id="SSF47323">
    <property type="entry name" value="Anticodon-binding domain of a subclass of class I aminoacyl-tRNA synthetases"/>
    <property type="match status" value="1"/>
</dbReference>
<dbReference type="SUPFAM" id="SSF55190">
    <property type="entry name" value="Arginyl-tRNA synthetase (ArgRS), N-terminal 'additional' domain"/>
    <property type="match status" value="1"/>
</dbReference>
<dbReference type="SUPFAM" id="SSF52374">
    <property type="entry name" value="Nucleotidylyl transferase"/>
    <property type="match status" value="1"/>
</dbReference>
<dbReference type="PROSITE" id="PS00178">
    <property type="entry name" value="AA_TRNA_LIGASE_I"/>
    <property type="match status" value="1"/>
</dbReference>
<reference key="1">
    <citation type="submission" date="2007-06" db="EMBL/GenBank/DDBJ databases">
        <title>Complete sequence of Clostridium beijerinckii NCIMB 8052.</title>
        <authorList>
            <consortium name="US DOE Joint Genome Institute"/>
            <person name="Copeland A."/>
            <person name="Lucas S."/>
            <person name="Lapidus A."/>
            <person name="Barry K."/>
            <person name="Detter J.C."/>
            <person name="Glavina del Rio T."/>
            <person name="Hammon N."/>
            <person name="Israni S."/>
            <person name="Dalin E."/>
            <person name="Tice H."/>
            <person name="Pitluck S."/>
            <person name="Sims D."/>
            <person name="Brettin T."/>
            <person name="Bruce D."/>
            <person name="Tapia R."/>
            <person name="Brainard J."/>
            <person name="Schmutz J."/>
            <person name="Larimer F."/>
            <person name="Land M."/>
            <person name="Hauser L."/>
            <person name="Kyrpides N."/>
            <person name="Mikhailova N."/>
            <person name="Bennet G."/>
            <person name="Cann I."/>
            <person name="Chen J.-S."/>
            <person name="Contreras A.L."/>
            <person name="Jones D."/>
            <person name="Kashket E."/>
            <person name="Mitchell W."/>
            <person name="Stoddard S."/>
            <person name="Schwarz W."/>
            <person name="Qureshi N."/>
            <person name="Young M."/>
            <person name="Shi Z."/>
            <person name="Ezeji T."/>
            <person name="White B."/>
            <person name="Blaschek H."/>
            <person name="Richardson P."/>
        </authorList>
    </citation>
    <scope>NUCLEOTIDE SEQUENCE [LARGE SCALE GENOMIC DNA]</scope>
    <source>
        <strain>ATCC 51743 / NCIMB 8052</strain>
    </source>
</reference>